<comment type="subcellular location">
    <subcellularLocation>
        <location evidence="1">Cytoplasm</location>
    </subcellularLocation>
</comment>
<comment type="miscellaneous">
    <text evidence="2">Present with 892 molecules/cell in log phase SD medium.</text>
</comment>
<comment type="sequence caution" evidence="3">
    <conflict type="erroneous initiation">
        <sequence resource="EMBL-CDS" id="CAA99459"/>
    </conflict>
</comment>
<dbReference type="EMBL" id="Z75146">
    <property type="protein sequence ID" value="CAA99459.1"/>
    <property type="status" value="ALT_INIT"/>
    <property type="molecule type" value="Genomic_DNA"/>
</dbReference>
<dbReference type="EMBL" id="BK006948">
    <property type="protein sequence ID" value="DAA11007.1"/>
    <property type="molecule type" value="Genomic_DNA"/>
</dbReference>
<dbReference type="PIR" id="S67131">
    <property type="entry name" value="S67131"/>
</dbReference>
<dbReference type="RefSeq" id="NP_014881.2">
    <property type="nucleotide sequence ID" value="NM_001183657.1"/>
</dbReference>
<dbReference type="BioGRID" id="34630">
    <property type="interactions" value="23"/>
</dbReference>
<dbReference type="FunCoup" id="Q08634">
    <property type="interactions" value="73"/>
</dbReference>
<dbReference type="MINT" id="Q08634"/>
<dbReference type="STRING" id="4932.YOR238W"/>
<dbReference type="iPTMnet" id="Q08634"/>
<dbReference type="PaxDb" id="4932-YOR238W"/>
<dbReference type="PeptideAtlas" id="Q08634"/>
<dbReference type="EnsemblFungi" id="YOR238W_mRNA">
    <property type="protein sequence ID" value="YOR238W"/>
    <property type="gene ID" value="YOR238W"/>
</dbReference>
<dbReference type="GeneID" id="854413"/>
<dbReference type="KEGG" id="sce:YOR238W"/>
<dbReference type="AGR" id="SGD:S000005764"/>
<dbReference type="SGD" id="S000005764">
    <property type="gene designation" value="YOR238W"/>
</dbReference>
<dbReference type="VEuPathDB" id="FungiDB:YOR238W"/>
<dbReference type="eggNOG" id="KOG4533">
    <property type="taxonomic scope" value="Eukaryota"/>
</dbReference>
<dbReference type="HOGENOM" id="CLU_048479_1_1_1"/>
<dbReference type="InParanoid" id="Q08634"/>
<dbReference type="OMA" id="DLYGCHG"/>
<dbReference type="OrthoDB" id="4347at2759"/>
<dbReference type="BioCyc" id="YEAST:G3O-33734-MONOMER"/>
<dbReference type="BioGRID-ORCS" id="854413">
    <property type="hits" value="1 hit in 10 CRISPR screens"/>
</dbReference>
<dbReference type="PRO" id="PR:Q08634"/>
<dbReference type="Proteomes" id="UP000002311">
    <property type="component" value="Chromosome XV"/>
</dbReference>
<dbReference type="RNAct" id="Q08634">
    <property type="molecule type" value="protein"/>
</dbReference>
<dbReference type="GO" id="GO:0005737">
    <property type="term" value="C:cytoplasm"/>
    <property type="evidence" value="ECO:0007005"/>
    <property type="project" value="SGD"/>
</dbReference>
<dbReference type="InterPro" id="IPR055323">
    <property type="entry name" value="C57A10.07/YOR238W"/>
</dbReference>
<dbReference type="PANTHER" id="PTHR28110">
    <property type="entry name" value="TRANSMEMBRANE PROTEIN"/>
    <property type="match status" value="1"/>
</dbReference>
<dbReference type="PANTHER" id="PTHR28110:SF1">
    <property type="entry name" value="TRANSMEMBRANE PROTEIN"/>
    <property type="match status" value="1"/>
</dbReference>
<reference key="1">
    <citation type="journal article" date="1997" name="Nature">
        <title>The nucleotide sequence of Saccharomyces cerevisiae chromosome XV.</title>
        <authorList>
            <person name="Dujon B."/>
            <person name="Albermann K."/>
            <person name="Aldea M."/>
            <person name="Alexandraki D."/>
            <person name="Ansorge W."/>
            <person name="Arino J."/>
            <person name="Benes V."/>
            <person name="Bohn C."/>
            <person name="Bolotin-Fukuhara M."/>
            <person name="Bordonne R."/>
            <person name="Boyer J."/>
            <person name="Camasses A."/>
            <person name="Casamayor A."/>
            <person name="Casas C."/>
            <person name="Cheret G."/>
            <person name="Cziepluch C."/>
            <person name="Daignan-Fornier B."/>
            <person name="Dang V.-D."/>
            <person name="de Haan M."/>
            <person name="Delius H."/>
            <person name="Durand P."/>
            <person name="Fairhead C."/>
            <person name="Feldmann H."/>
            <person name="Gaillon L."/>
            <person name="Galisson F."/>
            <person name="Gamo F.-J."/>
            <person name="Gancedo C."/>
            <person name="Goffeau A."/>
            <person name="Goulding S.E."/>
            <person name="Grivell L.A."/>
            <person name="Habbig B."/>
            <person name="Hand N.J."/>
            <person name="Hani J."/>
            <person name="Hattenhorst U."/>
            <person name="Hebling U."/>
            <person name="Hernando Y."/>
            <person name="Herrero E."/>
            <person name="Heumann K."/>
            <person name="Hiesel R."/>
            <person name="Hilger F."/>
            <person name="Hofmann B."/>
            <person name="Hollenberg C.P."/>
            <person name="Hughes B."/>
            <person name="Jauniaux J.-C."/>
            <person name="Kalogeropoulos A."/>
            <person name="Katsoulou C."/>
            <person name="Kordes E."/>
            <person name="Lafuente M.J."/>
            <person name="Landt O."/>
            <person name="Louis E.J."/>
            <person name="Maarse A.C."/>
            <person name="Madania A."/>
            <person name="Mannhaupt G."/>
            <person name="Marck C."/>
            <person name="Martin R.P."/>
            <person name="Mewes H.-W."/>
            <person name="Michaux G."/>
            <person name="Paces V."/>
            <person name="Parle-McDermott A.G."/>
            <person name="Pearson B.M."/>
            <person name="Perrin A."/>
            <person name="Pettersson B."/>
            <person name="Poch O."/>
            <person name="Pohl T.M."/>
            <person name="Poirey R."/>
            <person name="Portetelle D."/>
            <person name="Pujol A."/>
            <person name="Purnelle B."/>
            <person name="Ramezani Rad M."/>
            <person name="Rechmann S."/>
            <person name="Schwager C."/>
            <person name="Schweizer M."/>
            <person name="Sor F."/>
            <person name="Sterky F."/>
            <person name="Tarassov I.A."/>
            <person name="Teodoru C."/>
            <person name="Tettelin H."/>
            <person name="Thierry A."/>
            <person name="Tobiasch E."/>
            <person name="Tzermia M."/>
            <person name="Uhlen M."/>
            <person name="Unseld M."/>
            <person name="Valens M."/>
            <person name="Vandenbol M."/>
            <person name="Vetter I."/>
            <person name="Vlcek C."/>
            <person name="Voet M."/>
            <person name="Volckaert G."/>
            <person name="Voss H."/>
            <person name="Wambutt R."/>
            <person name="Wedler H."/>
            <person name="Wiemann S."/>
            <person name="Winsor B."/>
            <person name="Wolfe K.H."/>
            <person name="Zollner A."/>
            <person name="Zumstein E."/>
            <person name="Kleine K."/>
        </authorList>
    </citation>
    <scope>NUCLEOTIDE SEQUENCE [LARGE SCALE GENOMIC DNA]</scope>
    <source>
        <strain>ATCC 204508 / S288c</strain>
    </source>
</reference>
<reference key="2">
    <citation type="journal article" date="2014" name="G3 (Bethesda)">
        <title>The reference genome sequence of Saccharomyces cerevisiae: Then and now.</title>
        <authorList>
            <person name="Engel S.R."/>
            <person name="Dietrich F.S."/>
            <person name="Fisk D.G."/>
            <person name="Binkley G."/>
            <person name="Balakrishnan R."/>
            <person name="Costanzo M.C."/>
            <person name="Dwight S.S."/>
            <person name="Hitz B.C."/>
            <person name="Karra K."/>
            <person name="Nash R.S."/>
            <person name="Weng S."/>
            <person name="Wong E.D."/>
            <person name="Lloyd P."/>
            <person name="Skrzypek M.S."/>
            <person name="Miyasato S.R."/>
            <person name="Simison M."/>
            <person name="Cherry J.M."/>
        </authorList>
    </citation>
    <scope>GENOME REANNOTATION</scope>
    <source>
        <strain>ATCC 204508 / S288c</strain>
    </source>
</reference>
<reference key="3">
    <citation type="journal article" date="2003" name="Nature">
        <title>Sequencing and comparison of yeast species to identify genes and regulatory elements.</title>
        <authorList>
            <person name="Kellis M."/>
            <person name="Patterson N."/>
            <person name="Endrizzi M."/>
            <person name="Birren B.W."/>
            <person name="Lander E.S."/>
        </authorList>
    </citation>
    <scope>IDENTIFICATION OF PROBABLE INITIATION SITE</scope>
</reference>
<reference key="4">
    <citation type="journal article" date="2003" name="Nature">
        <title>Global analysis of protein localization in budding yeast.</title>
        <authorList>
            <person name="Huh W.-K."/>
            <person name="Falvo J.V."/>
            <person name="Gerke L.C."/>
            <person name="Carroll A.S."/>
            <person name="Howson R.W."/>
            <person name="Weissman J.S."/>
            <person name="O'Shea E.K."/>
        </authorList>
    </citation>
    <scope>SUBCELLULAR LOCATION [LARGE SCALE ANALYSIS]</scope>
</reference>
<reference key="5">
    <citation type="journal article" date="2003" name="Nature">
        <title>Global analysis of protein expression in yeast.</title>
        <authorList>
            <person name="Ghaemmaghami S."/>
            <person name="Huh W.-K."/>
            <person name="Bower K."/>
            <person name="Howson R.W."/>
            <person name="Belle A."/>
            <person name="Dephoure N."/>
            <person name="O'Shea E.K."/>
            <person name="Weissman J.S."/>
        </authorList>
    </citation>
    <scope>LEVEL OF PROTEIN EXPRESSION [LARGE SCALE ANALYSIS]</scope>
</reference>
<gene>
    <name type="ordered locus">YOR238W</name>
</gene>
<name>YO238_YEAST</name>
<organism>
    <name type="scientific">Saccharomyces cerevisiae (strain ATCC 204508 / S288c)</name>
    <name type="common">Baker's yeast</name>
    <dbReference type="NCBI Taxonomy" id="559292"/>
    <lineage>
        <taxon>Eukaryota</taxon>
        <taxon>Fungi</taxon>
        <taxon>Dikarya</taxon>
        <taxon>Ascomycota</taxon>
        <taxon>Saccharomycotina</taxon>
        <taxon>Saccharomycetes</taxon>
        <taxon>Saccharomycetales</taxon>
        <taxon>Saccharomycetaceae</taxon>
        <taxon>Saccharomyces</taxon>
    </lineage>
</organism>
<feature type="chain" id="PRO_0000237669" description="Uncharacterized protein YOR238W">
    <location>
        <begin position="1"/>
        <end position="303"/>
    </location>
</feature>
<proteinExistence type="evidence at protein level"/>
<keyword id="KW-0963">Cytoplasm</keyword>
<keyword id="KW-1185">Reference proteome</keyword>
<protein>
    <recommendedName>
        <fullName>Uncharacterized protein YOR238W</fullName>
    </recommendedName>
</protein>
<evidence type="ECO:0000269" key="1">
    <source>
    </source>
</evidence>
<evidence type="ECO:0000269" key="2">
    <source>
    </source>
</evidence>
<evidence type="ECO:0000305" key="3"/>
<accession>Q08634</accession>
<accession>D6W2U1</accession>
<sequence>MDEKVELILVPCHSIWKSSSHPSDNSVNLGQLPEYWHLAPFQYEGNDHLAFIKHGLTAIKLLLQRFDTATVIFSGSQTKKEAGAISEAQSYYFLFEKLIRYVMSNDNIDVPNFDNELRLLLKEVKNLLSSQNVNVDELFYGGSITTEEFSLDSFDNLIYSIYRFEEVNKKFPQKITIIGFAFKMPRFISCHAKAIDYPQSNITYIGIDPKPANYNQTQLSKYYDDLVQMEDKNALSLFSSDWYATKDRLLTKKRSRNPFNRTAPYAQNIFCKENGKRIEGIEDDEEYFETKIKCKMPWSSPRQ</sequence>